<dbReference type="EC" id="6.3.2.9" evidence="1"/>
<dbReference type="EMBL" id="CP001336">
    <property type="protein sequence ID" value="ACL22074.1"/>
    <property type="molecule type" value="Genomic_DNA"/>
</dbReference>
<dbReference type="RefSeq" id="WP_015944996.1">
    <property type="nucleotide sequence ID" value="NC_011830.1"/>
</dbReference>
<dbReference type="SMR" id="B8FT58"/>
<dbReference type="KEGG" id="dhd:Dhaf_4065"/>
<dbReference type="HOGENOM" id="CLU_032540_0_0_9"/>
<dbReference type="UniPathway" id="UPA00219"/>
<dbReference type="Proteomes" id="UP000007726">
    <property type="component" value="Chromosome"/>
</dbReference>
<dbReference type="GO" id="GO:0005737">
    <property type="term" value="C:cytoplasm"/>
    <property type="evidence" value="ECO:0007669"/>
    <property type="project" value="UniProtKB-SubCell"/>
</dbReference>
<dbReference type="GO" id="GO:0005524">
    <property type="term" value="F:ATP binding"/>
    <property type="evidence" value="ECO:0007669"/>
    <property type="project" value="UniProtKB-UniRule"/>
</dbReference>
<dbReference type="GO" id="GO:0008764">
    <property type="term" value="F:UDP-N-acetylmuramoylalanine-D-glutamate ligase activity"/>
    <property type="evidence" value="ECO:0007669"/>
    <property type="project" value="UniProtKB-UniRule"/>
</dbReference>
<dbReference type="GO" id="GO:0051301">
    <property type="term" value="P:cell division"/>
    <property type="evidence" value="ECO:0007669"/>
    <property type="project" value="UniProtKB-KW"/>
</dbReference>
<dbReference type="GO" id="GO:0071555">
    <property type="term" value="P:cell wall organization"/>
    <property type="evidence" value="ECO:0007669"/>
    <property type="project" value="UniProtKB-KW"/>
</dbReference>
<dbReference type="GO" id="GO:0009252">
    <property type="term" value="P:peptidoglycan biosynthetic process"/>
    <property type="evidence" value="ECO:0007669"/>
    <property type="project" value="UniProtKB-UniRule"/>
</dbReference>
<dbReference type="GO" id="GO:0008360">
    <property type="term" value="P:regulation of cell shape"/>
    <property type="evidence" value="ECO:0007669"/>
    <property type="project" value="UniProtKB-KW"/>
</dbReference>
<dbReference type="Gene3D" id="3.90.190.20">
    <property type="entry name" value="Mur ligase, C-terminal domain"/>
    <property type="match status" value="1"/>
</dbReference>
<dbReference type="Gene3D" id="3.40.1190.10">
    <property type="entry name" value="Mur-like, catalytic domain"/>
    <property type="match status" value="1"/>
</dbReference>
<dbReference type="Gene3D" id="3.40.50.720">
    <property type="entry name" value="NAD(P)-binding Rossmann-like Domain"/>
    <property type="match status" value="1"/>
</dbReference>
<dbReference type="HAMAP" id="MF_00639">
    <property type="entry name" value="MurD"/>
    <property type="match status" value="1"/>
</dbReference>
<dbReference type="InterPro" id="IPR036565">
    <property type="entry name" value="Mur-like_cat_sf"/>
</dbReference>
<dbReference type="InterPro" id="IPR004101">
    <property type="entry name" value="Mur_ligase_C"/>
</dbReference>
<dbReference type="InterPro" id="IPR036615">
    <property type="entry name" value="Mur_ligase_C_dom_sf"/>
</dbReference>
<dbReference type="InterPro" id="IPR013221">
    <property type="entry name" value="Mur_ligase_cen"/>
</dbReference>
<dbReference type="InterPro" id="IPR005762">
    <property type="entry name" value="MurD"/>
</dbReference>
<dbReference type="NCBIfam" id="TIGR01087">
    <property type="entry name" value="murD"/>
    <property type="match status" value="1"/>
</dbReference>
<dbReference type="PANTHER" id="PTHR43692">
    <property type="entry name" value="UDP-N-ACETYLMURAMOYLALANINE--D-GLUTAMATE LIGASE"/>
    <property type="match status" value="1"/>
</dbReference>
<dbReference type="PANTHER" id="PTHR43692:SF1">
    <property type="entry name" value="UDP-N-ACETYLMURAMOYLALANINE--D-GLUTAMATE LIGASE"/>
    <property type="match status" value="1"/>
</dbReference>
<dbReference type="Pfam" id="PF02875">
    <property type="entry name" value="Mur_ligase_C"/>
    <property type="match status" value="1"/>
</dbReference>
<dbReference type="Pfam" id="PF08245">
    <property type="entry name" value="Mur_ligase_M"/>
    <property type="match status" value="1"/>
</dbReference>
<dbReference type="Pfam" id="PF21799">
    <property type="entry name" value="MurD-like_N"/>
    <property type="match status" value="1"/>
</dbReference>
<dbReference type="SUPFAM" id="SSF51984">
    <property type="entry name" value="MurCD N-terminal domain"/>
    <property type="match status" value="1"/>
</dbReference>
<dbReference type="SUPFAM" id="SSF53623">
    <property type="entry name" value="MurD-like peptide ligases, catalytic domain"/>
    <property type="match status" value="1"/>
</dbReference>
<dbReference type="SUPFAM" id="SSF53244">
    <property type="entry name" value="MurD-like peptide ligases, peptide-binding domain"/>
    <property type="match status" value="1"/>
</dbReference>
<protein>
    <recommendedName>
        <fullName evidence="1">UDP-N-acetylmuramoylalanine--D-glutamate ligase</fullName>
        <ecNumber evidence="1">6.3.2.9</ecNumber>
    </recommendedName>
    <alternativeName>
        <fullName evidence="1">D-glutamic acid-adding enzyme</fullName>
    </alternativeName>
    <alternativeName>
        <fullName evidence="1">UDP-N-acetylmuramoyl-L-alanyl-D-glutamate synthetase</fullName>
    </alternativeName>
</protein>
<keyword id="KW-0067">ATP-binding</keyword>
<keyword id="KW-0131">Cell cycle</keyword>
<keyword id="KW-0132">Cell division</keyword>
<keyword id="KW-0133">Cell shape</keyword>
<keyword id="KW-0961">Cell wall biogenesis/degradation</keyword>
<keyword id="KW-0963">Cytoplasm</keyword>
<keyword id="KW-0436">Ligase</keyword>
<keyword id="KW-0547">Nucleotide-binding</keyword>
<keyword id="KW-0573">Peptidoglycan synthesis</keyword>
<evidence type="ECO:0000255" key="1">
    <source>
        <dbReference type="HAMAP-Rule" id="MF_00639"/>
    </source>
</evidence>
<comment type="function">
    <text evidence="1">Cell wall formation. Catalyzes the addition of glutamate to the nucleotide precursor UDP-N-acetylmuramoyl-L-alanine (UMA).</text>
</comment>
<comment type="catalytic activity">
    <reaction evidence="1">
        <text>UDP-N-acetyl-alpha-D-muramoyl-L-alanine + D-glutamate + ATP = UDP-N-acetyl-alpha-D-muramoyl-L-alanyl-D-glutamate + ADP + phosphate + H(+)</text>
        <dbReference type="Rhea" id="RHEA:16429"/>
        <dbReference type="ChEBI" id="CHEBI:15378"/>
        <dbReference type="ChEBI" id="CHEBI:29986"/>
        <dbReference type="ChEBI" id="CHEBI:30616"/>
        <dbReference type="ChEBI" id="CHEBI:43474"/>
        <dbReference type="ChEBI" id="CHEBI:83898"/>
        <dbReference type="ChEBI" id="CHEBI:83900"/>
        <dbReference type="ChEBI" id="CHEBI:456216"/>
        <dbReference type="EC" id="6.3.2.9"/>
    </reaction>
</comment>
<comment type="pathway">
    <text evidence="1">Cell wall biogenesis; peptidoglycan biosynthesis.</text>
</comment>
<comment type="subcellular location">
    <subcellularLocation>
        <location evidence="1">Cytoplasm</location>
    </subcellularLocation>
</comment>
<comment type="similarity">
    <text evidence="1">Belongs to the MurCDEF family.</text>
</comment>
<feature type="chain" id="PRO_1000147406" description="UDP-N-acetylmuramoylalanine--D-glutamate ligase">
    <location>
        <begin position="1"/>
        <end position="454"/>
    </location>
</feature>
<feature type="binding site" evidence="1">
    <location>
        <begin position="114"/>
        <end position="120"/>
    </location>
    <ligand>
        <name>ATP</name>
        <dbReference type="ChEBI" id="CHEBI:30616"/>
    </ligand>
</feature>
<gene>
    <name evidence="1" type="primary">murD</name>
    <name type="ordered locus">Dhaf_4065</name>
</gene>
<reference key="1">
    <citation type="journal article" date="2012" name="BMC Microbiol.">
        <title>Genome sequence of Desulfitobacterium hafniense DCB-2, a Gram-positive anaerobe capable of dehalogenation and metal reduction.</title>
        <authorList>
            <person name="Kim S.H."/>
            <person name="Harzman C."/>
            <person name="Davis J.K."/>
            <person name="Hutcheson R."/>
            <person name="Broderick J.B."/>
            <person name="Marsh T.L."/>
            <person name="Tiedje J.M."/>
        </authorList>
    </citation>
    <scope>NUCLEOTIDE SEQUENCE [LARGE SCALE GENOMIC DNA]</scope>
    <source>
        <strain>DSM 10664 / DCB-2</strain>
    </source>
</reference>
<proteinExistence type="inferred from homology"/>
<accession>B8FT58</accession>
<name>MURD_DESHD</name>
<sequence length="454" mass="49786">MNLKKKKVLVVGAGRSGLAAVKRLKALGARVILTDQKEPDQLSGILELGLPDGQLVLGHIPQWHEVEAEVIVLSPGVSPQLPFIQEGIAQGALVWSEVELALRDHPAFKIGVTGTNGKTTTTTLIGELARRTGKSTLVAGNIGVALSDQVENLDEEGIIVAELSSFQLELVDSLCMNVGILLNVTPDHLDRHGTLENYLAAKARIFEKQRPSDCAILNWDDARVRELAPHLKARVVFFSPTSLLAEGYGVQGDEIVLARDGKITPIIKRRELQLRGNHNLENIMASIAAVRELGLSWEEIAQGLREFKGVEHRQEVVGTYEGILFINDSKGTNPDAAEKALYAFEEPIVLIAGGKNKGLDFHDFMKTVKEQVKSLVLVGSAAAEMEQAAKDTGIRHYLRAETFAEAVELAIAEAEPGNVVLLSPACTSWDMFKSYEERGEFFKELVRRHYREPI</sequence>
<organism>
    <name type="scientific">Desulfitobacterium hafniense (strain DSM 10664 / DCB-2)</name>
    <dbReference type="NCBI Taxonomy" id="272564"/>
    <lineage>
        <taxon>Bacteria</taxon>
        <taxon>Bacillati</taxon>
        <taxon>Bacillota</taxon>
        <taxon>Clostridia</taxon>
        <taxon>Eubacteriales</taxon>
        <taxon>Desulfitobacteriaceae</taxon>
        <taxon>Desulfitobacterium</taxon>
    </lineage>
</organism>